<evidence type="ECO:0000255" key="1">
    <source>
        <dbReference type="HAMAP-Rule" id="MF_00639"/>
    </source>
</evidence>
<reference key="1">
    <citation type="journal article" date="2007" name="Genome Res.">
        <title>Genome sequence of a proteolytic (Group I) Clostridium botulinum strain Hall A and comparative analysis of the clostridial genomes.</title>
        <authorList>
            <person name="Sebaihia M."/>
            <person name="Peck M.W."/>
            <person name="Minton N.P."/>
            <person name="Thomson N.R."/>
            <person name="Holden M.T.G."/>
            <person name="Mitchell W.J."/>
            <person name="Carter A.T."/>
            <person name="Bentley S.D."/>
            <person name="Mason D.R."/>
            <person name="Crossman L."/>
            <person name="Paul C.J."/>
            <person name="Ivens A."/>
            <person name="Wells-Bennik M.H.J."/>
            <person name="Davis I.J."/>
            <person name="Cerdeno-Tarraga A.M."/>
            <person name="Churcher C."/>
            <person name="Quail M.A."/>
            <person name="Chillingworth T."/>
            <person name="Feltwell T."/>
            <person name="Fraser A."/>
            <person name="Goodhead I."/>
            <person name="Hance Z."/>
            <person name="Jagels K."/>
            <person name="Larke N."/>
            <person name="Maddison M."/>
            <person name="Moule S."/>
            <person name="Mungall K."/>
            <person name="Norbertczak H."/>
            <person name="Rabbinowitsch E."/>
            <person name="Sanders M."/>
            <person name="Simmonds M."/>
            <person name="White B."/>
            <person name="Whithead S."/>
            <person name="Parkhill J."/>
        </authorList>
    </citation>
    <scope>NUCLEOTIDE SEQUENCE [LARGE SCALE GENOMIC DNA]</scope>
    <source>
        <strain>Hall / ATCC 3502 / NCTC 13319 / Type A</strain>
    </source>
</reference>
<reference key="2">
    <citation type="journal article" date="2007" name="PLoS ONE">
        <title>Analysis of the neurotoxin complex genes in Clostridium botulinum A1-A4 and B1 strains: BoNT/A3, /Ba4 and /B1 clusters are located within plasmids.</title>
        <authorList>
            <person name="Smith T.J."/>
            <person name="Hill K.K."/>
            <person name="Foley B.T."/>
            <person name="Detter J.C."/>
            <person name="Munk A.C."/>
            <person name="Bruce D.C."/>
            <person name="Doggett N.A."/>
            <person name="Smith L.A."/>
            <person name="Marks J.D."/>
            <person name="Xie G."/>
            <person name="Brettin T.S."/>
        </authorList>
    </citation>
    <scope>NUCLEOTIDE SEQUENCE [LARGE SCALE GENOMIC DNA]</scope>
    <source>
        <strain>Hall / ATCC 3502 / NCTC 13319 / Type A</strain>
    </source>
</reference>
<sequence length="458" mass="51464">MKSNFSKFKDFIKYKKVAVVGIGVSNRPLIKFLVKLGAKVTAFDKKHREKLGSISLELEEIGVDLVLGENYLDKLDGYDVIFKTPSMRIDRPEFVKAKESGAYITSEMEEFIKYCPAKVFGITGSDGKTTTTTLVYEMLKKEGYRTWVGGNIGTPLFANIEEMKEDHMVVLELSSFQLMTMDVSPEISLITNLSPNHLDVHKDFEEYVWAKKNIFKYQSSNNLLVLNKDDDLTNGMENEALGDVLKFSLVEKVYNGACLSNNKLTIQGKEVCDSKDIKLKGRHNIANLLAAFCMVNKYVSIDSMKYVATNFSGVEHRCEFIREVNGIKYYNDSIASSPSRTLAGLNSFEKPVILIAGGYDKKIPFEPLAEGGYDKIKILILMGDTKNKIKSAFEKVISYKKCEMEIVIVNSMEEAVKVADNMAEKGDIITLSPACASFDMYPNFEIRGNEFKNIVNSL</sequence>
<comment type="function">
    <text evidence="1">Cell wall formation. Catalyzes the addition of glutamate to the nucleotide precursor UDP-N-acetylmuramoyl-L-alanine (UMA).</text>
</comment>
<comment type="catalytic activity">
    <reaction evidence="1">
        <text>UDP-N-acetyl-alpha-D-muramoyl-L-alanine + D-glutamate + ATP = UDP-N-acetyl-alpha-D-muramoyl-L-alanyl-D-glutamate + ADP + phosphate + H(+)</text>
        <dbReference type="Rhea" id="RHEA:16429"/>
        <dbReference type="ChEBI" id="CHEBI:15378"/>
        <dbReference type="ChEBI" id="CHEBI:29986"/>
        <dbReference type="ChEBI" id="CHEBI:30616"/>
        <dbReference type="ChEBI" id="CHEBI:43474"/>
        <dbReference type="ChEBI" id="CHEBI:83898"/>
        <dbReference type="ChEBI" id="CHEBI:83900"/>
        <dbReference type="ChEBI" id="CHEBI:456216"/>
        <dbReference type="EC" id="6.3.2.9"/>
    </reaction>
</comment>
<comment type="pathway">
    <text evidence="1">Cell wall biogenesis; peptidoglycan biosynthesis.</text>
</comment>
<comment type="subcellular location">
    <subcellularLocation>
        <location evidence="1">Cytoplasm</location>
    </subcellularLocation>
</comment>
<comment type="similarity">
    <text evidence="1">Belongs to the MurCDEF family.</text>
</comment>
<name>MURD_CLOBH</name>
<accession>A5I7P2</accession>
<accession>A7G8X4</accession>
<protein>
    <recommendedName>
        <fullName evidence="1">UDP-N-acetylmuramoylalanine--D-glutamate ligase</fullName>
        <ecNumber evidence="1">6.3.2.9</ecNumber>
    </recommendedName>
    <alternativeName>
        <fullName evidence="1">D-glutamic acid-adding enzyme</fullName>
    </alternativeName>
    <alternativeName>
        <fullName evidence="1">UDP-N-acetylmuramoyl-L-alanyl-D-glutamate synthetase</fullName>
    </alternativeName>
</protein>
<proteinExistence type="inferred from homology"/>
<dbReference type="EC" id="6.3.2.9" evidence="1"/>
<dbReference type="EMBL" id="CP000727">
    <property type="protein sequence ID" value="ABS37898.1"/>
    <property type="molecule type" value="Genomic_DNA"/>
</dbReference>
<dbReference type="EMBL" id="AM412317">
    <property type="protein sequence ID" value="CAL85077.1"/>
    <property type="molecule type" value="Genomic_DNA"/>
</dbReference>
<dbReference type="RefSeq" id="WP_012048369.1">
    <property type="nucleotide sequence ID" value="NC_009698.1"/>
</dbReference>
<dbReference type="RefSeq" id="YP_001255998.1">
    <property type="nucleotide sequence ID" value="NC_009495.1"/>
</dbReference>
<dbReference type="RefSeq" id="YP_001389239.1">
    <property type="nucleotide sequence ID" value="NC_009698.1"/>
</dbReference>
<dbReference type="SMR" id="A5I7P2"/>
<dbReference type="GeneID" id="5187736"/>
<dbReference type="KEGG" id="cbh:CLC_3480"/>
<dbReference type="KEGG" id="cbo:CBO3516"/>
<dbReference type="PATRIC" id="fig|413999.7.peg.3494"/>
<dbReference type="HOGENOM" id="CLU_032540_0_1_9"/>
<dbReference type="UniPathway" id="UPA00219"/>
<dbReference type="PRO" id="PR:A5I7P2"/>
<dbReference type="Proteomes" id="UP000001986">
    <property type="component" value="Chromosome"/>
</dbReference>
<dbReference type="GO" id="GO:0005737">
    <property type="term" value="C:cytoplasm"/>
    <property type="evidence" value="ECO:0007669"/>
    <property type="project" value="UniProtKB-SubCell"/>
</dbReference>
<dbReference type="GO" id="GO:0005524">
    <property type="term" value="F:ATP binding"/>
    <property type="evidence" value="ECO:0007669"/>
    <property type="project" value="UniProtKB-UniRule"/>
</dbReference>
<dbReference type="GO" id="GO:0008764">
    <property type="term" value="F:UDP-N-acetylmuramoylalanine-D-glutamate ligase activity"/>
    <property type="evidence" value="ECO:0007669"/>
    <property type="project" value="UniProtKB-UniRule"/>
</dbReference>
<dbReference type="GO" id="GO:0051301">
    <property type="term" value="P:cell division"/>
    <property type="evidence" value="ECO:0007669"/>
    <property type="project" value="UniProtKB-KW"/>
</dbReference>
<dbReference type="GO" id="GO:0071555">
    <property type="term" value="P:cell wall organization"/>
    <property type="evidence" value="ECO:0007669"/>
    <property type="project" value="UniProtKB-KW"/>
</dbReference>
<dbReference type="GO" id="GO:0009252">
    <property type="term" value="P:peptidoglycan biosynthetic process"/>
    <property type="evidence" value="ECO:0007669"/>
    <property type="project" value="UniProtKB-UniRule"/>
</dbReference>
<dbReference type="GO" id="GO:0008360">
    <property type="term" value="P:regulation of cell shape"/>
    <property type="evidence" value="ECO:0007669"/>
    <property type="project" value="UniProtKB-KW"/>
</dbReference>
<dbReference type="Gene3D" id="3.90.190.20">
    <property type="entry name" value="Mur ligase, C-terminal domain"/>
    <property type="match status" value="1"/>
</dbReference>
<dbReference type="Gene3D" id="3.40.1190.10">
    <property type="entry name" value="Mur-like, catalytic domain"/>
    <property type="match status" value="1"/>
</dbReference>
<dbReference type="Gene3D" id="3.40.50.720">
    <property type="entry name" value="NAD(P)-binding Rossmann-like Domain"/>
    <property type="match status" value="1"/>
</dbReference>
<dbReference type="HAMAP" id="MF_00639">
    <property type="entry name" value="MurD"/>
    <property type="match status" value="1"/>
</dbReference>
<dbReference type="InterPro" id="IPR036565">
    <property type="entry name" value="Mur-like_cat_sf"/>
</dbReference>
<dbReference type="InterPro" id="IPR004101">
    <property type="entry name" value="Mur_ligase_C"/>
</dbReference>
<dbReference type="InterPro" id="IPR036615">
    <property type="entry name" value="Mur_ligase_C_dom_sf"/>
</dbReference>
<dbReference type="InterPro" id="IPR013221">
    <property type="entry name" value="Mur_ligase_cen"/>
</dbReference>
<dbReference type="InterPro" id="IPR005762">
    <property type="entry name" value="MurD"/>
</dbReference>
<dbReference type="NCBIfam" id="TIGR01087">
    <property type="entry name" value="murD"/>
    <property type="match status" value="1"/>
</dbReference>
<dbReference type="PANTHER" id="PTHR43692">
    <property type="entry name" value="UDP-N-ACETYLMURAMOYLALANINE--D-GLUTAMATE LIGASE"/>
    <property type="match status" value="1"/>
</dbReference>
<dbReference type="PANTHER" id="PTHR43692:SF1">
    <property type="entry name" value="UDP-N-ACETYLMURAMOYLALANINE--D-GLUTAMATE LIGASE"/>
    <property type="match status" value="1"/>
</dbReference>
<dbReference type="Pfam" id="PF02875">
    <property type="entry name" value="Mur_ligase_C"/>
    <property type="match status" value="1"/>
</dbReference>
<dbReference type="Pfam" id="PF08245">
    <property type="entry name" value="Mur_ligase_M"/>
    <property type="match status" value="1"/>
</dbReference>
<dbReference type="Pfam" id="PF21799">
    <property type="entry name" value="MurD-like_N"/>
    <property type="match status" value="1"/>
</dbReference>
<dbReference type="SUPFAM" id="SSF51984">
    <property type="entry name" value="MurCD N-terminal domain"/>
    <property type="match status" value="1"/>
</dbReference>
<dbReference type="SUPFAM" id="SSF53623">
    <property type="entry name" value="MurD-like peptide ligases, catalytic domain"/>
    <property type="match status" value="1"/>
</dbReference>
<dbReference type="SUPFAM" id="SSF53244">
    <property type="entry name" value="MurD-like peptide ligases, peptide-binding domain"/>
    <property type="match status" value="1"/>
</dbReference>
<organism>
    <name type="scientific">Clostridium botulinum (strain Hall / ATCC 3502 / NCTC 13319 / Type A)</name>
    <dbReference type="NCBI Taxonomy" id="441771"/>
    <lineage>
        <taxon>Bacteria</taxon>
        <taxon>Bacillati</taxon>
        <taxon>Bacillota</taxon>
        <taxon>Clostridia</taxon>
        <taxon>Eubacteriales</taxon>
        <taxon>Clostridiaceae</taxon>
        <taxon>Clostridium</taxon>
    </lineage>
</organism>
<gene>
    <name evidence="1" type="primary">murD</name>
    <name type="ordered locus">CBO3516</name>
    <name type="ordered locus">CLC_3480</name>
</gene>
<feature type="chain" id="PRO_1000056881" description="UDP-N-acetylmuramoylalanine--D-glutamate ligase">
    <location>
        <begin position="1"/>
        <end position="458"/>
    </location>
</feature>
<feature type="binding site" evidence="1">
    <location>
        <begin position="124"/>
        <end position="130"/>
    </location>
    <ligand>
        <name>ATP</name>
        <dbReference type="ChEBI" id="CHEBI:30616"/>
    </ligand>
</feature>
<keyword id="KW-0067">ATP-binding</keyword>
<keyword id="KW-0131">Cell cycle</keyword>
<keyword id="KW-0132">Cell division</keyword>
<keyword id="KW-0133">Cell shape</keyword>
<keyword id="KW-0961">Cell wall biogenesis/degradation</keyword>
<keyword id="KW-0963">Cytoplasm</keyword>
<keyword id="KW-0436">Ligase</keyword>
<keyword id="KW-0547">Nucleotide-binding</keyword>
<keyword id="KW-0573">Peptidoglycan synthesis</keyword>
<keyword id="KW-1185">Reference proteome</keyword>